<comment type="function">
    <text evidence="1">Catalyzes the degradation of hydrogen peroxide (H(2)O(2)) generated by peroxisomal oxidases to water and oxygen, thereby protecting cells from the toxic effects of hydrogen peroxide.</text>
</comment>
<comment type="catalytic activity">
    <reaction evidence="3">
        <text>2 H2O2 = O2 + 2 H2O</text>
        <dbReference type="Rhea" id="RHEA:20309"/>
        <dbReference type="ChEBI" id="CHEBI:15377"/>
        <dbReference type="ChEBI" id="CHEBI:15379"/>
        <dbReference type="ChEBI" id="CHEBI:16240"/>
        <dbReference type="EC" id="1.11.1.6"/>
    </reaction>
</comment>
<comment type="cofactor">
    <cofactor evidence="2">
        <name>heme</name>
        <dbReference type="ChEBI" id="CHEBI:30413"/>
    </cofactor>
</comment>
<comment type="subcellular location">
    <subcellularLocation>
        <location evidence="2">Peroxisome matrix</location>
    </subcellularLocation>
</comment>
<comment type="similarity">
    <text evidence="5">Belongs to the catalase family.</text>
</comment>
<protein>
    <recommendedName>
        <fullName>Catalase A</fullName>
        <ecNumber evidence="3">1.11.1.6</ecNumber>
    </recommendedName>
    <alternativeName>
        <fullName>Fast catalase</fullName>
    </alternativeName>
</protein>
<reference key="1">
    <citation type="submission" date="1997-02" db="EMBL/GenBank/DDBJ databases">
        <title>Cloning, sequencing and characterization of Aspergillus fumigatus catalase genes.</title>
        <authorList>
            <person name="Wysong D.R."/>
            <person name="Diamond R.D."/>
            <person name="Robbins P.W."/>
        </authorList>
    </citation>
    <scope>NUCLEOTIDE SEQUENCE [GENOMIC DNA]</scope>
</reference>
<reference key="2">
    <citation type="journal article" date="2005" name="Nature">
        <title>Genomic sequence of the pathogenic and allergenic filamentous fungus Aspergillus fumigatus.</title>
        <authorList>
            <person name="Nierman W.C."/>
            <person name="Pain A."/>
            <person name="Anderson M.J."/>
            <person name="Wortman J.R."/>
            <person name="Kim H.S."/>
            <person name="Arroyo J."/>
            <person name="Berriman M."/>
            <person name="Abe K."/>
            <person name="Archer D.B."/>
            <person name="Bermejo C."/>
            <person name="Bennett J.W."/>
            <person name="Bowyer P."/>
            <person name="Chen D."/>
            <person name="Collins M."/>
            <person name="Coulsen R."/>
            <person name="Davies R."/>
            <person name="Dyer P.S."/>
            <person name="Farman M.L."/>
            <person name="Fedorova N."/>
            <person name="Fedorova N.D."/>
            <person name="Feldblyum T.V."/>
            <person name="Fischer R."/>
            <person name="Fosker N."/>
            <person name="Fraser A."/>
            <person name="Garcia J.L."/>
            <person name="Garcia M.J."/>
            <person name="Goble A."/>
            <person name="Goldman G.H."/>
            <person name="Gomi K."/>
            <person name="Griffith-Jones S."/>
            <person name="Gwilliam R."/>
            <person name="Haas B.J."/>
            <person name="Haas H."/>
            <person name="Harris D.E."/>
            <person name="Horiuchi H."/>
            <person name="Huang J."/>
            <person name="Humphray S."/>
            <person name="Jimenez J."/>
            <person name="Keller N."/>
            <person name="Khouri H."/>
            <person name="Kitamoto K."/>
            <person name="Kobayashi T."/>
            <person name="Konzack S."/>
            <person name="Kulkarni R."/>
            <person name="Kumagai T."/>
            <person name="Lafton A."/>
            <person name="Latge J.-P."/>
            <person name="Li W."/>
            <person name="Lord A."/>
            <person name="Lu C."/>
            <person name="Majoros W.H."/>
            <person name="May G.S."/>
            <person name="Miller B.L."/>
            <person name="Mohamoud Y."/>
            <person name="Molina M."/>
            <person name="Monod M."/>
            <person name="Mouyna I."/>
            <person name="Mulligan S."/>
            <person name="Murphy L.D."/>
            <person name="O'Neil S."/>
            <person name="Paulsen I."/>
            <person name="Penalva M.A."/>
            <person name="Pertea M."/>
            <person name="Price C."/>
            <person name="Pritchard B.L."/>
            <person name="Quail M.A."/>
            <person name="Rabbinowitsch E."/>
            <person name="Rawlins N."/>
            <person name="Rajandream M.A."/>
            <person name="Reichard U."/>
            <person name="Renauld H."/>
            <person name="Robson G.D."/>
            <person name="Rodriguez de Cordoba S."/>
            <person name="Rodriguez-Pena J.M."/>
            <person name="Ronning C.M."/>
            <person name="Rutter S."/>
            <person name="Salzberg S.L."/>
            <person name="Sanchez M."/>
            <person name="Sanchez-Ferrero J.C."/>
            <person name="Saunders D."/>
            <person name="Seeger K."/>
            <person name="Squares R."/>
            <person name="Squares S."/>
            <person name="Takeuchi M."/>
            <person name="Tekaia F."/>
            <person name="Turner G."/>
            <person name="Vazquez de Aldana C.R."/>
            <person name="Weidman J."/>
            <person name="White O."/>
            <person name="Woodward J.R."/>
            <person name="Yu J.-H."/>
            <person name="Fraser C.M."/>
            <person name="Galagan J.E."/>
            <person name="Asai K."/>
            <person name="Machida M."/>
            <person name="Hall N."/>
            <person name="Barrell B.G."/>
            <person name="Denning D.W."/>
        </authorList>
    </citation>
    <scope>NUCLEOTIDE SEQUENCE [LARGE SCALE GENOMIC DNA]</scope>
    <source>
        <strain>ATCC MYA-4609 / CBS 101355 / FGSC A1100 / Af293</strain>
    </source>
</reference>
<name>CATA_ASPFU</name>
<feature type="chain" id="PRO_0000084915" description="Catalase A">
    <location>
        <begin position="1"/>
        <end position="750"/>
    </location>
</feature>
<feature type="region of interest" description="Disordered" evidence="4">
    <location>
        <begin position="30"/>
        <end position="49"/>
    </location>
</feature>
<feature type="active site" evidence="3">
    <location>
        <position position="93"/>
    </location>
</feature>
<feature type="active site" evidence="3">
    <location>
        <position position="166"/>
    </location>
</feature>
<feature type="binding site" description="axial binding residue" evidence="1">
    <location>
        <position position="380"/>
    </location>
    <ligand>
        <name>heme</name>
        <dbReference type="ChEBI" id="CHEBI:30413"/>
    </ligand>
    <ligandPart>
        <name>Fe</name>
        <dbReference type="ChEBI" id="CHEBI:18248"/>
    </ligandPart>
</feature>
<feature type="sequence conflict" description="In Ref. 1; AAB47761." evidence="5" ref="1">
    <original>D</original>
    <variation>N</variation>
    <location>
        <position position="328"/>
    </location>
</feature>
<feature type="sequence conflict" description="In Ref. 1; AAB47761." evidence="5" ref="1">
    <original>S</original>
    <variation>N</variation>
    <location>
        <position position="462"/>
    </location>
</feature>
<feature type="sequence conflict" description="In Ref. 1; AAB47761." evidence="5" ref="1">
    <original>F</original>
    <variation>S</variation>
    <location>
        <position position="577"/>
    </location>
</feature>
<feature type="sequence conflict" description="In Ref. 1; AAB47761." evidence="5" ref="1">
    <original>DG</original>
    <variation>T</variation>
    <location>
        <begin position="604"/>
        <end position="605"/>
    </location>
</feature>
<feature type="sequence conflict" description="In Ref. 1; AAB47761." evidence="5" ref="1">
    <original>D</original>
    <variation>H</variation>
    <location>
        <position position="681"/>
    </location>
</feature>
<gene>
    <name type="primary">catA</name>
    <name type="ORF">AFUA_6G03890</name>
</gene>
<sequence>MATKIAGGLHRAQEVLQNTSSKSKKLVDLERDTADAHTQQPLTTDHGVRVSNTDQWLRVTNDRRTGPSLLEDQIAREKIHRFDHERIPERVVHARGTGAFGNFKLKESIEDLTYAGVLTDTSRNTPVFVRFSTVQGSRGSADTVRDVRGFAVKFYTDEGNWDIVGNNIPVFFIQDAVKFPDFVHAVKPEPHNEVPQAQTAHNNFWDFVYLHPEATHMFMWAMSDRAIPRSYRMMQGFGVNTFALVNKEGKRHFVKFHWIPHLGVHSLVWDEALKLGGQDPDFHRKDLMEAIDNKAYPKWDFAIQVIPEEKQDDFEFDILDATKIWPEDLVPLRVIGELELNRNVDEFFPQTEQVAFCTSHIVPGIDFTDDPLLQGRNFSYFDTQISRLGINWEELPINRPVCPVLNHNRDGQMRHRITQGTVNYWPNRFEAVPPTGTKGSGVGGGFTTYPQRVEGIKNRALSDKFREHHNQAQLFYNSMSEHEKLHMKKAFSFELDHCDDPTVYERLAGHRLAEIDLELAQKVAEMVGAPIPAKALKQNHGRRAPHLSQTEFIPKNPTIASRRIAIIIGDGYDPVAFTGLKTAIKAASALPFIIGTKRSAIYADGEDKTSSKGIIPDHHYDGQRSTMFDATFIPGGPHVATLRQNGQIKYWISETFGHLKALGATGEAVDLVKETLSGTLDVQVASSQSPEPVEWYGVVTAGGKQKPESFKESVQILKGATDFVGKFFYQISQHRNYQRELDGLASTIAF</sequence>
<proteinExistence type="inferred from homology"/>
<accession>P78574</accession>
<accession>Q4WD88</accession>
<organism>
    <name type="scientific">Aspergillus fumigatus (strain ATCC MYA-4609 / CBS 101355 / FGSC A1100 / Af293)</name>
    <name type="common">Neosartorya fumigata</name>
    <dbReference type="NCBI Taxonomy" id="330879"/>
    <lineage>
        <taxon>Eukaryota</taxon>
        <taxon>Fungi</taxon>
        <taxon>Dikarya</taxon>
        <taxon>Ascomycota</taxon>
        <taxon>Pezizomycotina</taxon>
        <taxon>Eurotiomycetes</taxon>
        <taxon>Eurotiomycetidae</taxon>
        <taxon>Eurotiales</taxon>
        <taxon>Aspergillaceae</taxon>
        <taxon>Aspergillus</taxon>
        <taxon>Aspergillus subgen. Fumigati</taxon>
    </lineage>
</organism>
<dbReference type="EC" id="1.11.1.6" evidence="3"/>
<dbReference type="EMBL" id="U87630">
    <property type="protein sequence ID" value="AAB47761.1"/>
    <property type="molecule type" value="Genomic_DNA"/>
</dbReference>
<dbReference type="EMBL" id="AAHF01000012">
    <property type="protein sequence ID" value="EAL85650.1"/>
    <property type="molecule type" value="Genomic_DNA"/>
</dbReference>
<dbReference type="RefSeq" id="XP_747688.1">
    <property type="nucleotide sequence ID" value="XM_742595.1"/>
</dbReference>
<dbReference type="SMR" id="P78574"/>
<dbReference type="STRING" id="330879.P78574"/>
<dbReference type="PeroxiBase" id="5205">
    <property type="entry name" value="AfumKat01"/>
</dbReference>
<dbReference type="SwissPalm" id="P78574"/>
<dbReference type="EnsemblFungi" id="EAL85650">
    <property type="protein sequence ID" value="EAL85650"/>
    <property type="gene ID" value="AFUA_6G03890"/>
</dbReference>
<dbReference type="GeneID" id="3505035"/>
<dbReference type="KEGG" id="afm:AFUA_6G03890"/>
<dbReference type="VEuPathDB" id="FungiDB:Afu6g03890"/>
<dbReference type="eggNOG" id="KOG0047">
    <property type="taxonomic scope" value="Eukaryota"/>
</dbReference>
<dbReference type="HOGENOM" id="CLU_010645_3_0_1"/>
<dbReference type="InParanoid" id="P78574"/>
<dbReference type="OMA" id="WQMSDRA"/>
<dbReference type="OrthoDB" id="6880011at2759"/>
<dbReference type="Proteomes" id="UP000002530">
    <property type="component" value="Chromosome 6"/>
</dbReference>
<dbReference type="GO" id="GO:0005829">
    <property type="term" value="C:cytosol"/>
    <property type="evidence" value="ECO:0000318"/>
    <property type="project" value="GO_Central"/>
</dbReference>
<dbReference type="GO" id="GO:0005782">
    <property type="term" value="C:peroxisomal matrix"/>
    <property type="evidence" value="ECO:0007669"/>
    <property type="project" value="UniProtKB-SubCell"/>
</dbReference>
<dbReference type="GO" id="GO:0004096">
    <property type="term" value="F:catalase activity"/>
    <property type="evidence" value="ECO:0000318"/>
    <property type="project" value="GO_Central"/>
</dbReference>
<dbReference type="GO" id="GO:0020037">
    <property type="term" value="F:heme binding"/>
    <property type="evidence" value="ECO:0000318"/>
    <property type="project" value="GO_Central"/>
</dbReference>
<dbReference type="GO" id="GO:0046872">
    <property type="term" value="F:metal ion binding"/>
    <property type="evidence" value="ECO:0007669"/>
    <property type="project" value="UniProtKB-KW"/>
</dbReference>
<dbReference type="GO" id="GO:0042744">
    <property type="term" value="P:hydrogen peroxide catabolic process"/>
    <property type="evidence" value="ECO:0000318"/>
    <property type="project" value="GO_Central"/>
</dbReference>
<dbReference type="GO" id="GO:0006979">
    <property type="term" value="P:response to oxidative stress"/>
    <property type="evidence" value="ECO:0000318"/>
    <property type="project" value="GO_Central"/>
</dbReference>
<dbReference type="CDD" id="cd03132">
    <property type="entry name" value="GATase1_catalase"/>
    <property type="match status" value="1"/>
</dbReference>
<dbReference type="FunFam" id="2.40.180.10:FF:000003">
    <property type="entry name" value="Catalase"/>
    <property type="match status" value="1"/>
</dbReference>
<dbReference type="FunFam" id="3.40.50.880:FF:000050">
    <property type="entry name" value="Catalase"/>
    <property type="match status" value="1"/>
</dbReference>
<dbReference type="FunFam" id="1.20.1370.20:FF:000001">
    <property type="entry name" value="Catalase HPII"/>
    <property type="match status" value="1"/>
</dbReference>
<dbReference type="Gene3D" id="1.20.1370.20">
    <property type="match status" value="1"/>
</dbReference>
<dbReference type="Gene3D" id="3.40.50.880">
    <property type="match status" value="1"/>
</dbReference>
<dbReference type="Gene3D" id="2.40.180.10">
    <property type="entry name" value="Catalase core domain"/>
    <property type="match status" value="1"/>
</dbReference>
<dbReference type="InterPro" id="IPR018028">
    <property type="entry name" value="Catalase"/>
</dbReference>
<dbReference type="InterPro" id="IPR024708">
    <property type="entry name" value="Catalase_AS"/>
</dbReference>
<dbReference type="InterPro" id="IPR024712">
    <property type="entry name" value="Catalase_clade2"/>
</dbReference>
<dbReference type="InterPro" id="IPR043156">
    <property type="entry name" value="Catalase_clade2_helical"/>
</dbReference>
<dbReference type="InterPro" id="IPR011614">
    <property type="entry name" value="Catalase_core"/>
</dbReference>
<dbReference type="InterPro" id="IPR002226">
    <property type="entry name" value="Catalase_haem_BS"/>
</dbReference>
<dbReference type="InterPro" id="IPR010582">
    <property type="entry name" value="Catalase_immune_responsive"/>
</dbReference>
<dbReference type="InterPro" id="IPR041399">
    <property type="entry name" value="Catalase_large_C"/>
</dbReference>
<dbReference type="InterPro" id="IPR020835">
    <property type="entry name" value="Catalase_sf"/>
</dbReference>
<dbReference type="InterPro" id="IPR029062">
    <property type="entry name" value="Class_I_gatase-like"/>
</dbReference>
<dbReference type="PANTHER" id="PTHR42821">
    <property type="entry name" value="CATALASE"/>
    <property type="match status" value="1"/>
</dbReference>
<dbReference type="PANTHER" id="PTHR42821:SF1">
    <property type="entry name" value="CATALASE-B"/>
    <property type="match status" value="1"/>
</dbReference>
<dbReference type="Pfam" id="PF00199">
    <property type="entry name" value="Catalase"/>
    <property type="match status" value="1"/>
</dbReference>
<dbReference type="Pfam" id="PF06628">
    <property type="entry name" value="Catalase-rel"/>
    <property type="match status" value="1"/>
</dbReference>
<dbReference type="PIRSF" id="PIRSF038927">
    <property type="entry name" value="Catalase_clade2"/>
    <property type="match status" value="1"/>
</dbReference>
<dbReference type="PRINTS" id="PR00067">
    <property type="entry name" value="CATALASE"/>
</dbReference>
<dbReference type="SMART" id="SM01060">
    <property type="entry name" value="Catalase"/>
    <property type="match status" value="1"/>
</dbReference>
<dbReference type="SUPFAM" id="SSF52317">
    <property type="entry name" value="Class I glutamine amidotransferase-like"/>
    <property type="match status" value="1"/>
</dbReference>
<dbReference type="SUPFAM" id="SSF56634">
    <property type="entry name" value="Heme-dependent catalase-like"/>
    <property type="match status" value="1"/>
</dbReference>
<dbReference type="PROSITE" id="PS00437">
    <property type="entry name" value="CATALASE_1"/>
    <property type="match status" value="1"/>
</dbReference>
<dbReference type="PROSITE" id="PS00438">
    <property type="entry name" value="CATALASE_2"/>
    <property type="match status" value="1"/>
</dbReference>
<dbReference type="PROSITE" id="PS51402">
    <property type="entry name" value="CATALASE_3"/>
    <property type="match status" value="1"/>
</dbReference>
<evidence type="ECO:0000250" key="1">
    <source>
        <dbReference type="UniProtKB" id="P04040"/>
    </source>
</evidence>
<evidence type="ECO:0000250" key="2">
    <source>
        <dbReference type="UniProtKB" id="P15202"/>
    </source>
</evidence>
<evidence type="ECO:0000255" key="3">
    <source>
        <dbReference type="PROSITE-ProRule" id="PRU10013"/>
    </source>
</evidence>
<evidence type="ECO:0000256" key="4">
    <source>
        <dbReference type="SAM" id="MobiDB-lite"/>
    </source>
</evidence>
<evidence type="ECO:0000305" key="5"/>
<keyword id="KW-0349">Heme</keyword>
<keyword id="KW-0376">Hydrogen peroxide</keyword>
<keyword id="KW-0408">Iron</keyword>
<keyword id="KW-0479">Metal-binding</keyword>
<keyword id="KW-0560">Oxidoreductase</keyword>
<keyword id="KW-0575">Peroxidase</keyword>
<keyword id="KW-0576">Peroxisome</keyword>
<keyword id="KW-1185">Reference proteome</keyword>